<sequence length="457" mass="49124">MQKYWREARSLLALAIPVIIAQIAQTAMGFVDTIMAGSVSATDMAAVAVGTSIWLPTILFGHGLLLALTPVIAQLNGAGKRPSIPHQISQGFWLVAGLSVLIIAVLYNAGHIISMMDNIDPLLADKAIGYLHAIMWGAPGYLCFQVLRGLCEGLSKTTPGMVIGFIGLLINIPVNYIFIYGKFGAPALGGVGCGVATASVYWIMYLLMHSYVARAPSLKDVRRPCTFEAADWATLRRLIAIGMPIALALFFEVTLFAVVALLVSPLGIVAVAGHQVALNFSSLMFVLPMSLGVAATIRVGYRLGQGSTDSARVSARTAIAVGMAMATCTAIFTIVLRKPIALLYNDDVQVLTMATHLMLLAALYQISDSVQVIGSGVLRGYKDTRSIFFITFIAYWLLGLPTGYLLALTNQITPAMGPSGFWIGFIIGLTSAAIMMALRIRWLQRQPKSWILQRAAR</sequence>
<proteinExistence type="inferred from homology"/>
<accession>C5BDY7</accession>
<name>MDTK_EDWI9</name>
<feature type="chain" id="PRO_1000205878" description="Multidrug resistance protein MdtK">
    <location>
        <begin position="1"/>
        <end position="457"/>
    </location>
</feature>
<feature type="transmembrane region" description="Helical" evidence="1">
    <location>
        <begin position="11"/>
        <end position="31"/>
    </location>
</feature>
<feature type="transmembrane region" description="Helical" evidence="1">
    <location>
        <begin position="53"/>
        <end position="73"/>
    </location>
</feature>
<feature type="transmembrane region" description="Helical" evidence="1">
    <location>
        <begin position="93"/>
        <end position="113"/>
    </location>
</feature>
<feature type="transmembrane region" description="Helical" evidence="1">
    <location>
        <begin position="127"/>
        <end position="147"/>
    </location>
</feature>
<feature type="transmembrane region" description="Helical" evidence="1">
    <location>
        <begin position="160"/>
        <end position="180"/>
    </location>
</feature>
<feature type="transmembrane region" description="Helical" evidence="1">
    <location>
        <begin position="188"/>
        <end position="208"/>
    </location>
</feature>
<feature type="transmembrane region" description="Helical" evidence="1">
    <location>
        <begin position="239"/>
        <end position="259"/>
    </location>
</feature>
<feature type="transmembrane region" description="Helical" evidence="1">
    <location>
        <begin position="277"/>
        <end position="297"/>
    </location>
</feature>
<feature type="transmembrane region" description="Helical" evidence="1">
    <location>
        <begin position="316"/>
        <end position="336"/>
    </location>
</feature>
<feature type="transmembrane region" description="Helical" evidence="1">
    <location>
        <begin position="357"/>
        <end position="377"/>
    </location>
</feature>
<feature type="transmembrane region" description="Helical" evidence="1">
    <location>
        <begin position="387"/>
        <end position="407"/>
    </location>
</feature>
<feature type="transmembrane region" description="Helical" evidence="1">
    <location>
        <begin position="418"/>
        <end position="438"/>
    </location>
</feature>
<organism>
    <name type="scientific">Edwardsiella ictaluri (strain 93-146)</name>
    <dbReference type="NCBI Taxonomy" id="634503"/>
    <lineage>
        <taxon>Bacteria</taxon>
        <taxon>Pseudomonadati</taxon>
        <taxon>Pseudomonadota</taxon>
        <taxon>Gammaproteobacteria</taxon>
        <taxon>Enterobacterales</taxon>
        <taxon>Hafniaceae</taxon>
        <taxon>Edwardsiella</taxon>
    </lineage>
</organism>
<evidence type="ECO:0000255" key="1">
    <source>
        <dbReference type="HAMAP-Rule" id="MF_00400"/>
    </source>
</evidence>
<protein>
    <recommendedName>
        <fullName evidence="1">Multidrug resistance protein MdtK</fullName>
    </recommendedName>
    <alternativeName>
        <fullName evidence="1">Multidrug-efflux transporter</fullName>
    </alternativeName>
</protein>
<reference key="1">
    <citation type="submission" date="2009-03" db="EMBL/GenBank/DDBJ databases">
        <title>Complete genome sequence of Edwardsiella ictaluri 93-146.</title>
        <authorList>
            <person name="Williams M.L."/>
            <person name="Gillaspy A.F."/>
            <person name="Dyer D.W."/>
            <person name="Thune R.L."/>
            <person name="Waldbieser G.C."/>
            <person name="Schuster S.C."/>
            <person name="Gipson J."/>
            <person name="Zaitshik J."/>
            <person name="Landry C."/>
            <person name="Lawrence M.L."/>
        </authorList>
    </citation>
    <scope>NUCLEOTIDE SEQUENCE [LARGE SCALE GENOMIC DNA]</scope>
    <source>
        <strain>93-146</strain>
    </source>
</reference>
<keyword id="KW-0050">Antiport</keyword>
<keyword id="KW-0997">Cell inner membrane</keyword>
<keyword id="KW-1003">Cell membrane</keyword>
<keyword id="KW-0406">Ion transport</keyword>
<keyword id="KW-0472">Membrane</keyword>
<keyword id="KW-0915">Sodium</keyword>
<keyword id="KW-0739">Sodium transport</keyword>
<keyword id="KW-0812">Transmembrane</keyword>
<keyword id="KW-1133">Transmembrane helix</keyword>
<keyword id="KW-0813">Transport</keyword>
<gene>
    <name evidence="1" type="primary">mdtK</name>
    <name type="ordered locus">NT01EI_1728</name>
</gene>
<dbReference type="EMBL" id="CP001600">
    <property type="protein sequence ID" value="ACR68907.1"/>
    <property type="molecule type" value="Genomic_DNA"/>
</dbReference>
<dbReference type="RefSeq" id="WP_015871057.1">
    <property type="nucleotide sequence ID" value="NZ_CP169062.1"/>
</dbReference>
<dbReference type="SMR" id="C5BDY7"/>
<dbReference type="KEGG" id="eic:NT01EI_1728"/>
<dbReference type="PATRIC" id="fig|634503.3.peg.1548"/>
<dbReference type="HOGENOM" id="CLU_012893_6_0_6"/>
<dbReference type="OrthoDB" id="9780160at2"/>
<dbReference type="Proteomes" id="UP000001485">
    <property type="component" value="Chromosome"/>
</dbReference>
<dbReference type="GO" id="GO:0005886">
    <property type="term" value="C:plasma membrane"/>
    <property type="evidence" value="ECO:0007669"/>
    <property type="project" value="UniProtKB-SubCell"/>
</dbReference>
<dbReference type="GO" id="GO:0015297">
    <property type="term" value="F:antiporter activity"/>
    <property type="evidence" value="ECO:0007669"/>
    <property type="project" value="UniProtKB-UniRule"/>
</dbReference>
<dbReference type="GO" id="GO:0042910">
    <property type="term" value="F:xenobiotic transmembrane transporter activity"/>
    <property type="evidence" value="ECO:0007669"/>
    <property type="project" value="UniProtKB-UniRule"/>
</dbReference>
<dbReference type="GO" id="GO:0006814">
    <property type="term" value="P:sodium ion transport"/>
    <property type="evidence" value="ECO:0007669"/>
    <property type="project" value="UniProtKB-UniRule"/>
</dbReference>
<dbReference type="GO" id="GO:0006855">
    <property type="term" value="P:xenobiotic transmembrane transport"/>
    <property type="evidence" value="ECO:0007669"/>
    <property type="project" value="UniProtKB-UniRule"/>
</dbReference>
<dbReference type="CDD" id="cd13131">
    <property type="entry name" value="MATE_NorM_like"/>
    <property type="match status" value="1"/>
</dbReference>
<dbReference type="HAMAP" id="MF_00400">
    <property type="entry name" value="MdtK"/>
    <property type="match status" value="1"/>
</dbReference>
<dbReference type="InterPro" id="IPR002528">
    <property type="entry name" value="MATE_fam"/>
</dbReference>
<dbReference type="InterPro" id="IPR050222">
    <property type="entry name" value="MATE_MdtK"/>
</dbReference>
<dbReference type="InterPro" id="IPR048279">
    <property type="entry name" value="MdtK-like"/>
</dbReference>
<dbReference type="InterPro" id="IPR022913">
    <property type="entry name" value="Multidrug-R_MdtK"/>
</dbReference>
<dbReference type="NCBIfam" id="TIGR00797">
    <property type="entry name" value="matE"/>
    <property type="match status" value="1"/>
</dbReference>
<dbReference type="PANTHER" id="PTHR43298:SF2">
    <property type="entry name" value="FMN_FAD EXPORTER YEEO-RELATED"/>
    <property type="match status" value="1"/>
</dbReference>
<dbReference type="PANTHER" id="PTHR43298">
    <property type="entry name" value="MULTIDRUG RESISTANCE PROTEIN NORM-RELATED"/>
    <property type="match status" value="1"/>
</dbReference>
<dbReference type="Pfam" id="PF01554">
    <property type="entry name" value="MatE"/>
    <property type="match status" value="2"/>
</dbReference>
<dbReference type="PIRSF" id="PIRSF006603">
    <property type="entry name" value="DinF"/>
    <property type="match status" value="1"/>
</dbReference>
<comment type="function">
    <text evidence="1">Multidrug efflux pump that functions probably as a Na(+)/drug antiporter.</text>
</comment>
<comment type="subcellular location">
    <subcellularLocation>
        <location evidence="1">Cell inner membrane</location>
        <topology evidence="1">Multi-pass membrane protein</topology>
    </subcellularLocation>
</comment>
<comment type="similarity">
    <text evidence="1">Belongs to the multi antimicrobial extrusion (MATE) (TC 2.A.66.1) family. MdtK subfamily.</text>
</comment>